<dbReference type="EC" id="2.7.7.6" evidence="1"/>
<dbReference type="EMBL" id="CP000680">
    <property type="protein sequence ID" value="ABP86662.1"/>
    <property type="molecule type" value="Genomic_DNA"/>
</dbReference>
<dbReference type="SMR" id="A4XZ96"/>
<dbReference type="STRING" id="399739.Pmen_3915"/>
<dbReference type="KEGG" id="pmy:Pmen_3915"/>
<dbReference type="PATRIC" id="fig|399739.8.peg.3968"/>
<dbReference type="eggNOG" id="COG0086">
    <property type="taxonomic scope" value="Bacteria"/>
</dbReference>
<dbReference type="HOGENOM" id="CLU_000524_3_1_6"/>
<dbReference type="OrthoDB" id="9815296at2"/>
<dbReference type="GO" id="GO:0000428">
    <property type="term" value="C:DNA-directed RNA polymerase complex"/>
    <property type="evidence" value="ECO:0007669"/>
    <property type="project" value="UniProtKB-KW"/>
</dbReference>
<dbReference type="GO" id="GO:0003677">
    <property type="term" value="F:DNA binding"/>
    <property type="evidence" value="ECO:0007669"/>
    <property type="project" value="UniProtKB-UniRule"/>
</dbReference>
<dbReference type="GO" id="GO:0003899">
    <property type="term" value="F:DNA-directed RNA polymerase activity"/>
    <property type="evidence" value="ECO:0007669"/>
    <property type="project" value="UniProtKB-UniRule"/>
</dbReference>
<dbReference type="GO" id="GO:0000287">
    <property type="term" value="F:magnesium ion binding"/>
    <property type="evidence" value="ECO:0007669"/>
    <property type="project" value="UniProtKB-UniRule"/>
</dbReference>
<dbReference type="GO" id="GO:0008270">
    <property type="term" value="F:zinc ion binding"/>
    <property type="evidence" value="ECO:0007669"/>
    <property type="project" value="UniProtKB-UniRule"/>
</dbReference>
<dbReference type="GO" id="GO:0006351">
    <property type="term" value="P:DNA-templated transcription"/>
    <property type="evidence" value="ECO:0007669"/>
    <property type="project" value="UniProtKB-UniRule"/>
</dbReference>
<dbReference type="CDD" id="cd02655">
    <property type="entry name" value="RNAP_beta'_C"/>
    <property type="match status" value="1"/>
</dbReference>
<dbReference type="CDD" id="cd01609">
    <property type="entry name" value="RNAP_beta'_N"/>
    <property type="match status" value="1"/>
</dbReference>
<dbReference type="FunFam" id="1.10.132.30:FF:000003">
    <property type="entry name" value="DNA-directed RNA polymerase subunit beta"/>
    <property type="match status" value="1"/>
</dbReference>
<dbReference type="FunFam" id="1.10.150.390:FF:000002">
    <property type="entry name" value="DNA-directed RNA polymerase subunit beta"/>
    <property type="match status" value="1"/>
</dbReference>
<dbReference type="FunFam" id="1.10.40.90:FF:000001">
    <property type="entry name" value="DNA-directed RNA polymerase subunit beta"/>
    <property type="match status" value="1"/>
</dbReference>
<dbReference type="FunFam" id="4.10.860.120:FF:000001">
    <property type="entry name" value="DNA-directed RNA polymerase subunit beta"/>
    <property type="match status" value="1"/>
</dbReference>
<dbReference type="Gene3D" id="1.10.132.30">
    <property type="match status" value="1"/>
</dbReference>
<dbReference type="Gene3D" id="1.10.150.390">
    <property type="match status" value="1"/>
</dbReference>
<dbReference type="Gene3D" id="1.10.1790.20">
    <property type="match status" value="1"/>
</dbReference>
<dbReference type="Gene3D" id="1.10.40.90">
    <property type="match status" value="1"/>
</dbReference>
<dbReference type="Gene3D" id="2.40.40.20">
    <property type="match status" value="1"/>
</dbReference>
<dbReference type="Gene3D" id="2.40.50.100">
    <property type="match status" value="3"/>
</dbReference>
<dbReference type="Gene3D" id="4.10.860.120">
    <property type="entry name" value="RNA polymerase II, clamp domain"/>
    <property type="match status" value="1"/>
</dbReference>
<dbReference type="Gene3D" id="1.10.274.100">
    <property type="entry name" value="RNA polymerase Rpb1, domain 3"/>
    <property type="match status" value="1"/>
</dbReference>
<dbReference type="HAMAP" id="MF_01322">
    <property type="entry name" value="RNApol_bact_RpoC"/>
    <property type="match status" value="1"/>
</dbReference>
<dbReference type="InterPro" id="IPR045867">
    <property type="entry name" value="DNA-dir_RpoC_beta_prime"/>
</dbReference>
<dbReference type="InterPro" id="IPR012754">
    <property type="entry name" value="DNA-dir_RpoC_beta_prime_bact"/>
</dbReference>
<dbReference type="InterPro" id="IPR000722">
    <property type="entry name" value="RNA_pol_asu"/>
</dbReference>
<dbReference type="InterPro" id="IPR006592">
    <property type="entry name" value="RNA_pol_N"/>
</dbReference>
<dbReference type="InterPro" id="IPR007080">
    <property type="entry name" value="RNA_pol_Rpb1_1"/>
</dbReference>
<dbReference type="InterPro" id="IPR007066">
    <property type="entry name" value="RNA_pol_Rpb1_3"/>
</dbReference>
<dbReference type="InterPro" id="IPR042102">
    <property type="entry name" value="RNA_pol_Rpb1_3_sf"/>
</dbReference>
<dbReference type="InterPro" id="IPR007083">
    <property type="entry name" value="RNA_pol_Rpb1_4"/>
</dbReference>
<dbReference type="InterPro" id="IPR007081">
    <property type="entry name" value="RNA_pol_Rpb1_5"/>
</dbReference>
<dbReference type="InterPro" id="IPR044893">
    <property type="entry name" value="RNA_pol_Rpb1_clamp_domain"/>
</dbReference>
<dbReference type="InterPro" id="IPR038120">
    <property type="entry name" value="Rpb1_funnel_sf"/>
</dbReference>
<dbReference type="NCBIfam" id="TIGR02386">
    <property type="entry name" value="rpoC_TIGR"/>
    <property type="match status" value="1"/>
</dbReference>
<dbReference type="PANTHER" id="PTHR19376">
    <property type="entry name" value="DNA-DIRECTED RNA POLYMERASE"/>
    <property type="match status" value="1"/>
</dbReference>
<dbReference type="PANTHER" id="PTHR19376:SF54">
    <property type="entry name" value="DNA-DIRECTED RNA POLYMERASE SUBUNIT BETA"/>
    <property type="match status" value="1"/>
</dbReference>
<dbReference type="Pfam" id="PF04997">
    <property type="entry name" value="RNA_pol_Rpb1_1"/>
    <property type="match status" value="1"/>
</dbReference>
<dbReference type="Pfam" id="PF00623">
    <property type="entry name" value="RNA_pol_Rpb1_2"/>
    <property type="match status" value="2"/>
</dbReference>
<dbReference type="Pfam" id="PF04983">
    <property type="entry name" value="RNA_pol_Rpb1_3"/>
    <property type="match status" value="1"/>
</dbReference>
<dbReference type="Pfam" id="PF05000">
    <property type="entry name" value="RNA_pol_Rpb1_4"/>
    <property type="match status" value="1"/>
</dbReference>
<dbReference type="Pfam" id="PF04998">
    <property type="entry name" value="RNA_pol_Rpb1_5"/>
    <property type="match status" value="1"/>
</dbReference>
<dbReference type="SMART" id="SM00663">
    <property type="entry name" value="RPOLA_N"/>
    <property type="match status" value="1"/>
</dbReference>
<dbReference type="SUPFAM" id="SSF64484">
    <property type="entry name" value="beta and beta-prime subunits of DNA dependent RNA-polymerase"/>
    <property type="match status" value="1"/>
</dbReference>
<evidence type="ECO:0000255" key="1">
    <source>
        <dbReference type="HAMAP-Rule" id="MF_01322"/>
    </source>
</evidence>
<organism>
    <name type="scientific">Ectopseudomonas mendocina (strain ymp)</name>
    <name type="common">Pseudomonas mendocina</name>
    <dbReference type="NCBI Taxonomy" id="399739"/>
    <lineage>
        <taxon>Bacteria</taxon>
        <taxon>Pseudomonadati</taxon>
        <taxon>Pseudomonadota</taxon>
        <taxon>Gammaproteobacteria</taxon>
        <taxon>Pseudomonadales</taxon>
        <taxon>Pseudomonadaceae</taxon>
        <taxon>Ectopseudomonas</taxon>
    </lineage>
</organism>
<protein>
    <recommendedName>
        <fullName evidence="1">DNA-directed RNA polymerase subunit beta'</fullName>
        <shortName evidence="1">RNAP subunit beta'</shortName>
        <ecNumber evidence="1">2.7.7.6</ecNumber>
    </recommendedName>
    <alternativeName>
        <fullName evidence="1">RNA polymerase subunit beta'</fullName>
    </alternativeName>
    <alternativeName>
        <fullName evidence="1">Transcriptase subunit beta'</fullName>
    </alternativeName>
</protein>
<feature type="chain" id="PRO_1000086403" description="DNA-directed RNA polymerase subunit beta'">
    <location>
        <begin position="1"/>
        <end position="1399"/>
    </location>
</feature>
<feature type="binding site" evidence="1">
    <location>
        <position position="70"/>
    </location>
    <ligand>
        <name>Zn(2+)</name>
        <dbReference type="ChEBI" id="CHEBI:29105"/>
        <label>1</label>
    </ligand>
</feature>
<feature type="binding site" evidence="1">
    <location>
        <position position="72"/>
    </location>
    <ligand>
        <name>Zn(2+)</name>
        <dbReference type="ChEBI" id="CHEBI:29105"/>
        <label>1</label>
    </ligand>
</feature>
<feature type="binding site" evidence="1">
    <location>
        <position position="85"/>
    </location>
    <ligand>
        <name>Zn(2+)</name>
        <dbReference type="ChEBI" id="CHEBI:29105"/>
        <label>1</label>
    </ligand>
</feature>
<feature type="binding site" evidence="1">
    <location>
        <position position="88"/>
    </location>
    <ligand>
        <name>Zn(2+)</name>
        <dbReference type="ChEBI" id="CHEBI:29105"/>
        <label>1</label>
    </ligand>
</feature>
<feature type="binding site" evidence="1">
    <location>
        <position position="460"/>
    </location>
    <ligand>
        <name>Mg(2+)</name>
        <dbReference type="ChEBI" id="CHEBI:18420"/>
    </ligand>
</feature>
<feature type="binding site" evidence="1">
    <location>
        <position position="462"/>
    </location>
    <ligand>
        <name>Mg(2+)</name>
        <dbReference type="ChEBI" id="CHEBI:18420"/>
    </ligand>
</feature>
<feature type="binding site" evidence="1">
    <location>
        <position position="464"/>
    </location>
    <ligand>
        <name>Mg(2+)</name>
        <dbReference type="ChEBI" id="CHEBI:18420"/>
    </ligand>
</feature>
<feature type="binding site" evidence="1">
    <location>
        <position position="814"/>
    </location>
    <ligand>
        <name>Zn(2+)</name>
        <dbReference type="ChEBI" id="CHEBI:29105"/>
        <label>2</label>
    </ligand>
</feature>
<feature type="binding site" evidence="1">
    <location>
        <position position="888"/>
    </location>
    <ligand>
        <name>Zn(2+)</name>
        <dbReference type="ChEBI" id="CHEBI:29105"/>
        <label>2</label>
    </ligand>
</feature>
<feature type="binding site" evidence="1">
    <location>
        <position position="895"/>
    </location>
    <ligand>
        <name>Zn(2+)</name>
        <dbReference type="ChEBI" id="CHEBI:29105"/>
        <label>2</label>
    </ligand>
</feature>
<feature type="binding site" evidence="1">
    <location>
        <position position="898"/>
    </location>
    <ligand>
        <name>Zn(2+)</name>
        <dbReference type="ChEBI" id="CHEBI:29105"/>
        <label>2</label>
    </ligand>
</feature>
<gene>
    <name evidence="1" type="primary">rpoC</name>
    <name type="ordered locus">Pmen_3915</name>
</gene>
<name>RPOC_ECTM1</name>
<keyword id="KW-0240">DNA-directed RNA polymerase</keyword>
<keyword id="KW-0460">Magnesium</keyword>
<keyword id="KW-0479">Metal-binding</keyword>
<keyword id="KW-0548">Nucleotidyltransferase</keyword>
<keyword id="KW-0804">Transcription</keyword>
<keyword id="KW-0808">Transferase</keyword>
<keyword id="KW-0862">Zinc</keyword>
<sequence length="1399" mass="154682">MKDLLNLLKNQGQIEEFDAIRIGLASPEMIRSWSFGEVKKPETINYRTFKPERDGLFCAKIFGPVKDYECLCGKYKRLKHRGVICEKCGVEVALAKVRRERMAHIELASPVAHIWFLKSLPSRIGLLMDMTLRDIERVLYFESYVVIDPGMTTLEKGQLLNDEQYFEALEEFGDDFDARMGAEAVRELLHAIDLDHEIGRLREEIPQTNSETKIKKLSKRLKLMEAFKDSGNLPEWMVLTVLPVLPPDLRPLVPLDGGRFATSDLNDLYRRVINRNNRLKRLLDLSAPDIIVRNEKRMLQEAVDALLDNGRRGRAITGSNKRPLKSLADMIKGKQGRFRQNLLGKRVDYSGRSVITVGPTLRLHQCGLPKKMALELFKPFIFGKLEMRGLATTIKAAKKMVERELPEVWDVLAEVIREHPVLLNRAPTLHRLGIQAFEPVLIEGKAIQLHPLVCAAYNADFDGDQMAVHVPLTLEAQLEARALMMSTNNILSPANGEPIIVPSQDVVLGLYYMTREAVNAKGEGRVFADLQEVDRVFRAGEASLHARVKVRINETVKEKDGSITKNTRIVDTTVGRALLFQIVPAGLSYDVVNQPMKKKAISKLINQCYRTVGLKDTVIFADQLMYTGFAYSTISGVSIGVNDFVIPEEKARIIDAATEEVKEIESQYASGLVTQGEKYNKVIDLWSKANDEVSKAMMANLSKEPVVDREGKTVEQESFNSMYMMADSGARGSAAQIRQLAGMRGLMAKPDGSIIETPITANFREGLSVLQYFISTHGARKGLADTALKTANSGYLTRRLVDVAQDLVVTEIDCGTEQGLLMTPHIEGGDVVEPLGERVLGRVIAKDVFKPGTEDVIVPAGTLIDEKWVEFIELNSVDEVVVRSPITCETRYGICAKCYGRDLARGHQVNIGEAVGVIAAQSIGEPGTQLTMRTFHIGGAASRTSAADSVQVKNGGAIRLHNLKHVERVDGNLVAVSRSGELAVADEFGRERERYKLPYGAVISVKEGDKVDAGAIVAKWDPHTHPIVTEMKGIVTFVGMEEGITIKRQTDELTGLTNIEVLDPKDRPAAGKDIRPAIKMVDANGKELLLPGTDVPAQYFLPANALVGVADGAQIAVGDVIARIPQETSKTRDITGGLPRVADLFEARRPKEASILAEISGTISFGKETKGKRRLVITPTDGSDPYEELIPKWRHLNVFEGEQVNRGEVISDGPSDPHDILRLLGVSALAKYIVNEIQDVYRLQGVKINDKHIETILRQMLRKVEVTESGDSSFIKGDQMELTQVLGENERLAEEDKFVAKYTRVLLGITKASLSTESFISAASFQETTRVLTEAAVTGKRDYLRGLKENVVVGRLIPAGTGLAYHSERKRKRDADKPVRVSASEVEAALTEALNSSGN</sequence>
<reference key="1">
    <citation type="submission" date="2007-04" db="EMBL/GenBank/DDBJ databases">
        <title>Complete sequence of Pseudomonas mendocina ymp.</title>
        <authorList>
            <consortium name="US DOE Joint Genome Institute"/>
            <person name="Copeland A."/>
            <person name="Lucas S."/>
            <person name="Lapidus A."/>
            <person name="Barry K."/>
            <person name="Glavina del Rio T."/>
            <person name="Dalin E."/>
            <person name="Tice H."/>
            <person name="Pitluck S."/>
            <person name="Kiss H."/>
            <person name="Brettin T."/>
            <person name="Detter J.C."/>
            <person name="Bruce D."/>
            <person name="Han C."/>
            <person name="Schmutz J."/>
            <person name="Larimer F."/>
            <person name="Land M."/>
            <person name="Hauser L."/>
            <person name="Kyrpides N."/>
            <person name="Mikhailova N."/>
            <person name="Hersman L."/>
            <person name="Dubois J."/>
            <person name="Maurice P."/>
            <person name="Richardson P."/>
        </authorList>
    </citation>
    <scope>NUCLEOTIDE SEQUENCE [LARGE SCALE GENOMIC DNA]</scope>
    <source>
        <strain>ymp</strain>
    </source>
</reference>
<comment type="function">
    <text evidence="1">DNA-dependent RNA polymerase catalyzes the transcription of DNA into RNA using the four ribonucleoside triphosphates as substrates.</text>
</comment>
<comment type="catalytic activity">
    <reaction evidence="1">
        <text>RNA(n) + a ribonucleoside 5'-triphosphate = RNA(n+1) + diphosphate</text>
        <dbReference type="Rhea" id="RHEA:21248"/>
        <dbReference type="Rhea" id="RHEA-COMP:14527"/>
        <dbReference type="Rhea" id="RHEA-COMP:17342"/>
        <dbReference type="ChEBI" id="CHEBI:33019"/>
        <dbReference type="ChEBI" id="CHEBI:61557"/>
        <dbReference type="ChEBI" id="CHEBI:140395"/>
        <dbReference type="EC" id="2.7.7.6"/>
    </reaction>
</comment>
<comment type="cofactor">
    <cofactor evidence="1">
        <name>Mg(2+)</name>
        <dbReference type="ChEBI" id="CHEBI:18420"/>
    </cofactor>
    <text evidence="1">Binds 1 Mg(2+) ion per subunit.</text>
</comment>
<comment type="cofactor">
    <cofactor evidence="1">
        <name>Zn(2+)</name>
        <dbReference type="ChEBI" id="CHEBI:29105"/>
    </cofactor>
    <text evidence="1">Binds 2 Zn(2+) ions per subunit.</text>
</comment>
<comment type="subunit">
    <text evidence="1">The RNAP catalytic core consists of 2 alpha, 1 beta, 1 beta' and 1 omega subunit. When a sigma factor is associated with the core the holoenzyme is formed, which can initiate transcription.</text>
</comment>
<comment type="similarity">
    <text evidence="1">Belongs to the RNA polymerase beta' chain family.</text>
</comment>
<proteinExistence type="inferred from homology"/>
<accession>A4XZ96</accession>